<feature type="chain" id="PRO_1000120841" description="NAD kinase">
    <location>
        <begin position="1"/>
        <end position="285"/>
    </location>
</feature>
<feature type="active site" description="Proton acceptor" evidence="1">
    <location>
        <position position="66"/>
    </location>
</feature>
<feature type="binding site" evidence="1">
    <location>
        <begin position="66"/>
        <end position="67"/>
    </location>
    <ligand>
        <name>NAD(+)</name>
        <dbReference type="ChEBI" id="CHEBI:57540"/>
    </ligand>
</feature>
<feature type="binding site" evidence="1">
    <location>
        <begin position="137"/>
        <end position="138"/>
    </location>
    <ligand>
        <name>NAD(+)</name>
        <dbReference type="ChEBI" id="CHEBI:57540"/>
    </ligand>
</feature>
<feature type="binding site" evidence="1">
    <location>
        <position position="148"/>
    </location>
    <ligand>
        <name>NAD(+)</name>
        <dbReference type="ChEBI" id="CHEBI:57540"/>
    </ligand>
</feature>
<feature type="binding site" evidence="1">
    <location>
        <position position="165"/>
    </location>
    <ligand>
        <name>NAD(+)</name>
        <dbReference type="ChEBI" id="CHEBI:57540"/>
    </ligand>
</feature>
<feature type="binding site" evidence="1">
    <location>
        <position position="167"/>
    </location>
    <ligand>
        <name>NAD(+)</name>
        <dbReference type="ChEBI" id="CHEBI:57540"/>
    </ligand>
</feature>
<feature type="binding site" evidence="1">
    <location>
        <begin position="178"/>
        <end position="183"/>
    </location>
    <ligand>
        <name>NAD(+)</name>
        <dbReference type="ChEBI" id="CHEBI:57540"/>
    </ligand>
</feature>
<evidence type="ECO:0000255" key="1">
    <source>
        <dbReference type="HAMAP-Rule" id="MF_00361"/>
    </source>
</evidence>
<protein>
    <recommendedName>
        <fullName evidence="1">NAD kinase</fullName>
        <ecNumber evidence="1">2.7.1.23</ecNumber>
    </recommendedName>
    <alternativeName>
        <fullName evidence="1">ATP-dependent NAD kinase</fullName>
    </alternativeName>
</protein>
<organism>
    <name type="scientific">Chlorobium phaeobacteroides (strain BS1)</name>
    <dbReference type="NCBI Taxonomy" id="331678"/>
    <lineage>
        <taxon>Bacteria</taxon>
        <taxon>Pseudomonadati</taxon>
        <taxon>Chlorobiota</taxon>
        <taxon>Chlorobiia</taxon>
        <taxon>Chlorobiales</taxon>
        <taxon>Chlorobiaceae</taxon>
        <taxon>Chlorobium/Pelodictyon group</taxon>
        <taxon>Chlorobium</taxon>
    </lineage>
</organism>
<sequence>MKFGIVVNINRKDALELASELVIWLKNRSLDYLFDSLSAKALNVNESSPIEAMNTHCDVFISLGGDGTLLFTSHYSVTKPVIGINVGHLGFLTEFSKEEMYGAIEKVLNGSYTIYERTQLEAHIDVEHEKKRFTALNDVVIEKGTYSRIPTFNIKLDDEQLSAYRADGIIIATSTGSTAYSLSAGGPVIFPKSNVFVITPICPHMLTVRPIVISDDKHIEVFVDAPDGEFPLNCDGHQRKLLLPGEVISVKKSEEMINLVANENRNYCEILRSKLLWGREHKPGL</sequence>
<comment type="function">
    <text evidence="1">Involved in the regulation of the intracellular balance of NAD and NADP, and is a key enzyme in the biosynthesis of NADP. Catalyzes specifically the phosphorylation on 2'-hydroxyl of the adenosine moiety of NAD to yield NADP.</text>
</comment>
<comment type="catalytic activity">
    <reaction evidence="1">
        <text>NAD(+) + ATP = ADP + NADP(+) + H(+)</text>
        <dbReference type="Rhea" id="RHEA:18629"/>
        <dbReference type="ChEBI" id="CHEBI:15378"/>
        <dbReference type="ChEBI" id="CHEBI:30616"/>
        <dbReference type="ChEBI" id="CHEBI:57540"/>
        <dbReference type="ChEBI" id="CHEBI:58349"/>
        <dbReference type="ChEBI" id="CHEBI:456216"/>
        <dbReference type="EC" id="2.7.1.23"/>
    </reaction>
</comment>
<comment type="cofactor">
    <cofactor evidence="1">
        <name>a divalent metal cation</name>
        <dbReference type="ChEBI" id="CHEBI:60240"/>
    </cofactor>
</comment>
<comment type="subcellular location">
    <subcellularLocation>
        <location evidence="1">Cytoplasm</location>
    </subcellularLocation>
</comment>
<comment type="similarity">
    <text evidence="1">Belongs to the NAD kinase family.</text>
</comment>
<reference key="1">
    <citation type="submission" date="2008-06" db="EMBL/GenBank/DDBJ databases">
        <title>Complete sequence of Chlorobium phaeobacteroides BS1.</title>
        <authorList>
            <consortium name="US DOE Joint Genome Institute"/>
            <person name="Lucas S."/>
            <person name="Copeland A."/>
            <person name="Lapidus A."/>
            <person name="Glavina del Rio T."/>
            <person name="Dalin E."/>
            <person name="Tice H."/>
            <person name="Bruce D."/>
            <person name="Goodwin L."/>
            <person name="Pitluck S."/>
            <person name="Schmutz J."/>
            <person name="Larimer F."/>
            <person name="Land M."/>
            <person name="Hauser L."/>
            <person name="Kyrpides N."/>
            <person name="Ovchinnikova G."/>
            <person name="Li T."/>
            <person name="Liu Z."/>
            <person name="Zhao F."/>
            <person name="Overmann J."/>
            <person name="Bryant D.A."/>
            <person name="Richardson P."/>
        </authorList>
    </citation>
    <scope>NUCLEOTIDE SEQUENCE [LARGE SCALE GENOMIC DNA]</scope>
    <source>
        <strain>BS1</strain>
    </source>
</reference>
<dbReference type="EC" id="2.7.1.23" evidence="1"/>
<dbReference type="EMBL" id="CP001101">
    <property type="protein sequence ID" value="ACE05327.1"/>
    <property type="molecule type" value="Genomic_DNA"/>
</dbReference>
<dbReference type="SMR" id="B3EPT7"/>
<dbReference type="STRING" id="331678.Cphamn1_2432"/>
<dbReference type="KEGG" id="cpb:Cphamn1_2432"/>
<dbReference type="eggNOG" id="COG0061">
    <property type="taxonomic scope" value="Bacteria"/>
</dbReference>
<dbReference type="HOGENOM" id="CLU_008831_0_1_10"/>
<dbReference type="OrthoDB" id="9774737at2"/>
<dbReference type="GO" id="GO:0005737">
    <property type="term" value="C:cytoplasm"/>
    <property type="evidence" value="ECO:0007669"/>
    <property type="project" value="UniProtKB-SubCell"/>
</dbReference>
<dbReference type="GO" id="GO:0005524">
    <property type="term" value="F:ATP binding"/>
    <property type="evidence" value="ECO:0007669"/>
    <property type="project" value="UniProtKB-KW"/>
</dbReference>
<dbReference type="GO" id="GO:0046872">
    <property type="term" value="F:metal ion binding"/>
    <property type="evidence" value="ECO:0007669"/>
    <property type="project" value="UniProtKB-UniRule"/>
</dbReference>
<dbReference type="GO" id="GO:0051287">
    <property type="term" value="F:NAD binding"/>
    <property type="evidence" value="ECO:0007669"/>
    <property type="project" value="UniProtKB-ARBA"/>
</dbReference>
<dbReference type="GO" id="GO:0003951">
    <property type="term" value="F:NAD+ kinase activity"/>
    <property type="evidence" value="ECO:0007669"/>
    <property type="project" value="UniProtKB-UniRule"/>
</dbReference>
<dbReference type="GO" id="GO:0019674">
    <property type="term" value="P:NAD metabolic process"/>
    <property type="evidence" value="ECO:0007669"/>
    <property type="project" value="InterPro"/>
</dbReference>
<dbReference type="GO" id="GO:0006741">
    <property type="term" value="P:NADP biosynthetic process"/>
    <property type="evidence" value="ECO:0007669"/>
    <property type="project" value="UniProtKB-UniRule"/>
</dbReference>
<dbReference type="Gene3D" id="3.40.50.10330">
    <property type="entry name" value="Probable inorganic polyphosphate/atp-NAD kinase, domain 1"/>
    <property type="match status" value="1"/>
</dbReference>
<dbReference type="Gene3D" id="2.60.200.30">
    <property type="entry name" value="Probable inorganic polyphosphate/atp-NAD kinase, domain 2"/>
    <property type="match status" value="1"/>
</dbReference>
<dbReference type="HAMAP" id="MF_00361">
    <property type="entry name" value="NAD_kinase"/>
    <property type="match status" value="1"/>
</dbReference>
<dbReference type="InterPro" id="IPR017438">
    <property type="entry name" value="ATP-NAD_kinase_N"/>
</dbReference>
<dbReference type="InterPro" id="IPR017437">
    <property type="entry name" value="ATP-NAD_kinase_PpnK-typ_C"/>
</dbReference>
<dbReference type="InterPro" id="IPR016064">
    <property type="entry name" value="NAD/diacylglycerol_kinase_sf"/>
</dbReference>
<dbReference type="InterPro" id="IPR002504">
    <property type="entry name" value="NADK"/>
</dbReference>
<dbReference type="PANTHER" id="PTHR20275">
    <property type="entry name" value="NAD KINASE"/>
    <property type="match status" value="1"/>
</dbReference>
<dbReference type="PANTHER" id="PTHR20275:SF0">
    <property type="entry name" value="NAD KINASE"/>
    <property type="match status" value="1"/>
</dbReference>
<dbReference type="Pfam" id="PF01513">
    <property type="entry name" value="NAD_kinase"/>
    <property type="match status" value="1"/>
</dbReference>
<dbReference type="Pfam" id="PF20143">
    <property type="entry name" value="NAD_kinase_C"/>
    <property type="match status" value="1"/>
</dbReference>
<dbReference type="SUPFAM" id="SSF111331">
    <property type="entry name" value="NAD kinase/diacylglycerol kinase-like"/>
    <property type="match status" value="1"/>
</dbReference>
<accession>B3EPT7</accession>
<proteinExistence type="inferred from homology"/>
<name>NADK_CHLPB</name>
<gene>
    <name evidence="1" type="primary">nadK</name>
    <name type="ordered locus">Cphamn1_2432</name>
</gene>
<keyword id="KW-0067">ATP-binding</keyword>
<keyword id="KW-0963">Cytoplasm</keyword>
<keyword id="KW-0418">Kinase</keyword>
<keyword id="KW-0520">NAD</keyword>
<keyword id="KW-0521">NADP</keyword>
<keyword id="KW-0547">Nucleotide-binding</keyword>
<keyword id="KW-0808">Transferase</keyword>